<organism>
    <name type="scientific">Synechocystis sp. (strain ATCC 27184 / PCC 6803 / Kazusa)</name>
    <dbReference type="NCBI Taxonomy" id="1111708"/>
    <lineage>
        <taxon>Bacteria</taxon>
        <taxon>Bacillati</taxon>
        <taxon>Cyanobacteriota</taxon>
        <taxon>Cyanophyceae</taxon>
        <taxon>Synechococcales</taxon>
        <taxon>Merismopediaceae</taxon>
        <taxon>Synechocystis</taxon>
    </lineage>
</organism>
<dbReference type="EC" id="2.10.1.1"/>
<dbReference type="EMBL" id="BA000022">
    <property type="protein sequence ID" value="BAA10450.1"/>
    <property type="molecule type" value="Genomic_DNA"/>
</dbReference>
<dbReference type="PIR" id="S75715">
    <property type="entry name" value="S75715"/>
</dbReference>
<dbReference type="SMR" id="Q55368"/>
<dbReference type="FunCoup" id="Q55368">
    <property type="interactions" value="389"/>
</dbReference>
<dbReference type="IntAct" id="Q55368">
    <property type="interactions" value="1"/>
</dbReference>
<dbReference type="STRING" id="1148.gene:10499951"/>
<dbReference type="PaxDb" id="1148-1001210"/>
<dbReference type="EnsemblBacteria" id="BAA10450">
    <property type="protein sequence ID" value="BAA10450"/>
    <property type="gene ID" value="BAA10450"/>
</dbReference>
<dbReference type="KEGG" id="syn:slr0900"/>
<dbReference type="eggNOG" id="COG0303">
    <property type="taxonomic scope" value="Bacteria"/>
</dbReference>
<dbReference type="InParanoid" id="Q55368"/>
<dbReference type="PhylomeDB" id="Q55368"/>
<dbReference type="UniPathway" id="UPA00344"/>
<dbReference type="Proteomes" id="UP000001425">
    <property type="component" value="Chromosome"/>
</dbReference>
<dbReference type="GO" id="GO:0005737">
    <property type="term" value="C:cytoplasm"/>
    <property type="evidence" value="ECO:0000318"/>
    <property type="project" value="GO_Central"/>
</dbReference>
<dbReference type="GO" id="GO:0005829">
    <property type="term" value="C:cytosol"/>
    <property type="evidence" value="ECO:0000318"/>
    <property type="project" value="GO_Central"/>
</dbReference>
<dbReference type="GO" id="GO:0046872">
    <property type="term" value="F:metal ion binding"/>
    <property type="evidence" value="ECO:0007669"/>
    <property type="project" value="UniProtKB-KW"/>
</dbReference>
<dbReference type="GO" id="GO:0061599">
    <property type="term" value="F:molybdopterin molybdotransferase activity"/>
    <property type="evidence" value="ECO:0000318"/>
    <property type="project" value="GO_Central"/>
</dbReference>
<dbReference type="GO" id="GO:0006777">
    <property type="term" value="P:Mo-molybdopterin cofactor biosynthetic process"/>
    <property type="evidence" value="ECO:0000318"/>
    <property type="project" value="GO_Central"/>
</dbReference>
<dbReference type="CDD" id="cd00887">
    <property type="entry name" value="MoeA"/>
    <property type="match status" value="1"/>
</dbReference>
<dbReference type="Gene3D" id="3.40.980.10">
    <property type="entry name" value="MoaB/Mog-like domain"/>
    <property type="match status" value="1"/>
</dbReference>
<dbReference type="Gene3D" id="2.40.340.10">
    <property type="entry name" value="MoeA, C-terminal, domain IV"/>
    <property type="match status" value="1"/>
</dbReference>
<dbReference type="Gene3D" id="3.90.105.10">
    <property type="entry name" value="Molybdopterin biosynthesis moea protein, domain 2"/>
    <property type="match status" value="1"/>
</dbReference>
<dbReference type="Gene3D" id="2.170.190.11">
    <property type="entry name" value="Molybdopterin biosynthesis moea protein, domain 3"/>
    <property type="match status" value="1"/>
</dbReference>
<dbReference type="InterPro" id="IPR036425">
    <property type="entry name" value="MoaB/Mog-like_dom_sf"/>
</dbReference>
<dbReference type="InterPro" id="IPR001453">
    <property type="entry name" value="MoaB/Mog_dom"/>
</dbReference>
<dbReference type="InterPro" id="IPR008284">
    <property type="entry name" value="MoCF_biosynth_CS"/>
</dbReference>
<dbReference type="InterPro" id="IPR038987">
    <property type="entry name" value="MoeA-like"/>
</dbReference>
<dbReference type="InterPro" id="IPR005111">
    <property type="entry name" value="MoeA_C_domain_IV"/>
</dbReference>
<dbReference type="InterPro" id="IPR036688">
    <property type="entry name" value="MoeA_C_domain_IV_sf"/>
</dbReference>
<dbReference type="InterPro" id="IPR005110">
    <property type="entry name" value="MoeA_linker/N"/>
</dbReference>
<dbReference type="InterPro" id="IPR036135">
    <property type="entry name" value="MoeA_linker/N_sf"/>
</dbReference>
<dbReference type="NCBIfam" id="TIGR00177">
    <property type="entry name" value="molyb_syn"/>
    <property type="match status" value="1"/>
</dbReference>
<dbReference type="PANTHER" id="PTHR10192:SF5">
    <property type="entry name" value="GEPHYRIN"/>
    <property type="match status" value="1"/>
</dbReference>
<dbReference type="PANTHER" id="PTHR10192">
    <property type="entry name" value="MOLYBDOPTERIN BIOSYNTHESIS PROTEIN"/>
    <property type="match status" value="1"/>
</dbReference>
<dbReference type="Pfam" id="PF00994">
    <property type="entry name" value="MoCF_biosynth"/>
    <property type="match status" value="1"/>
</dbReference>
<dbReference type="Pfam" id="PF03454">
    <property type="entry name" value="MoeA_C"/>
    <property type="match status" value="1"/>
</dbReference>
<dbReference type="Pfam" id="PF03453">
    <property type="entry name" value="MoeA_N"/>
    <property type="match status" value="1"/>
</dbReference>
<dbReference type="SMART" id="SM00852">
    <property type="entry name" value="MoCF_biosynth"/>
    <property type="match status" value="1"/>
</dbReference>
<dbReference type="SUPFAM" id="SSF63867">
    <property type="entry name" value="MoeA C-terminal domain-like"/>
    <property type="match status" value="1"/>
</dbReference>
<dbReference type="SUPFAM" id="SSF63882">
    <property type="entry name" value="MoeA N-terminal region -like"/>
    <property type="match status" value="1"/>
</dbReference>
<dbReference type="SUPFAM" id="SSF53218">
    <property type="entry name" value="Molybdenum cofactor biosynthesis proteins"/>
    <property type="match status" value="1"/>
</dbReference>
<dbReference type="PROSITE" id="PS01079">
    <property type="entry name" value="MOCF_BIOSYNTHESIS_2"/>
    <property type="match status" value="1"/>
</dbReference>
<name>MOEA_SYNY3</name>
<proteinExistence type="inferred from homology"/>
<reference key="1">
    <citation type="journal article" date="1995" name="DNA Res.">
        <title>Sequence analysis of the genome of the unicellular cyanobacterium Synechocystis sp. strain PCC6803. I. Sequence features in the 1 Mb region from map positions 64% to 92% of the genome.</title>
        <authorList>
            <person name="Kaneko T."/>
            <person name="Tanaka A."/>
            <person name="Sato S."/>
            <person name="Kotani H."/>
            <person name="Sazuka T."/>
            <person name="Miyajima N."/>
            <person name="Sugiura M."/>
            <person name="Tabata S."/>
        </authorList>
    </citation>
    <scope>NUCLEOTIDE SEQUENCE [LARGE SCALE GENOMIC DNA]</scope>
    <source>
        <strain>ATCC 27184 / PCC 6803 / N-1</strain>
    </source>
</reference>
<reference key="2">
    <citation type="journal article" date="1996" name="DNA Res.">
        <title>Sequence analysis of the genome of the unicellular cyanobacterium Synechocystis sp. strain PCC6803. II. Sequence determination of the entire genome and assignment of potential protein-coding regions.</title>
        <authorList>
            <person name="Kaneko T."/>
            <person name="Sato S."/>
            <person name="Kotani H."/>
            <person name="Tanaka A."/>
            <person name="Asamizu E."/>
            <person name="Nakamura Y."/>
            <person name="Miyajima N."/>
            <person name="Hirosawa M."/>
            <person name="Sugiura M."/>
            <person name="Sasamoto S."/>
            <person name="Kimura T."/>
            <person name="Hosouchi T."/>
            <person name="Matsuno A."/>
            <person name="Muraki A."/>
            <person name="Nakazaki N."/>
            <person name="Naruo K."/>
            <person name="Okumura S."/>
            <person name="Shimpo S."/>
            <person name="Takeuchi C."/>
            <person name="Wada T."/>
            <person name="Watanabe A."/>
            <person name="Yamada M."/>
            <person name="Yasuda M."/>
            <person name="Tabata S."/>
        </authorList>
    </citation>
    <scope>NUCLEOTIDE SEQUENCE [LARGE SCALE GENOMIC DNA]</scope>
    <source>
        <strain>ATCC 27184 / PCC 6803 / Kazusa</strain>
    </source>
</reference>
<accession>Q55368</accession>
<comment type="function">
    <text evidence="1">Catalyzes the insertion of molybdate into adenylated molybdopterin with the concomitant release of AMP.</text>
</comment>
<comment type="catalytic activity">
    <reaction>
        <text>adenylyl-molybdopterin + molybdate = Mo-molybdopterin + AMP + H(+)</text>
        <dbReference type="Rhea" id="RHEA:35047"/>
        <dbReference type="ChEBI" id="CHEBI:15378"/>
        <dbReference type="ChEBI" id="CHEBI:36264"/>
        <dbReference type="ChEBI" id="CHEBI:62727"/>
        <dbReference type="ChEBI" id="CHEBI:71302"/>
        <dbReference type="ChEBI" id="CHEBI:456215"/>
        <dbReference type="EC" id="2.10.1.1"/>
    </reaction>
</comment>
<comment type="cofactor">
    <cofactor evidence="1">
        <name>Mg(2+)</name>
        <dbReference type="ChEBI" id="CHEBI:18420"/>
    </cofactor>
    <text evidence="1">Binds 1 Mg(2+) ion per subunit.</text>
</comment>
<comment type="pathway">
    <text>Cofactor biosynthesis; molybdopterin biosynthesis.</text>
</comment>
<comment type="similarity">
    <text evidence="2">Belongs to the MoeA family.</text>
</comment>
<sequence length="390" mass="43394">MISVAAAVEIIQAHWPNFGDTTMDVDGSYGRVLAESIEADRDYPPGDRVMMDGVALAWSEYHQGRRHFKLLGTVAAGTPQSSLPDQTGCLEVMTGALLPQNCDLVIPYEEVAIADNQVKIINPRQREPGEFVHPKASDCRAGKVILESSSKLNGPAWNIITSFGKTKVRVKQKPRIQIISTGDELVEITQKPKIHQLRRSNIYGLQVSLQSRGFQNVNLTHLADDKEVIIRHYQKAKLEYRVLIYSGGISKGKFDYLPEVWSQLGVTKYIHGVAQKPGKPMYFGIDHRSKTVIIGLPGNPISSLVCLHRYFLDSAPIYAQLTTDFTFKKDLTYFLPVKLSHTPQAVIKAEPLPVKNSGEFIALAGSDGFLELPQHQASFQAGECFPFYAW</sequence>
<feature type="chain" id="PRO_0000171003" description="Molybdopterin molybdenumtransferase">
    <location>
        <begin position="1"/>
        <end position="390"/>
    </location>
</feature>
<evidence type="ECO:0000250" key="1"/>
<evidence type="ECO:0000305" key="2"/>
<keyword id="KW-0460">Magnesium</keyword>
<keyword id="KW-0479">Metal-binding</keyword>
<keyword id="KW-0500">Molybdenum</keyword>
<keyword id="KW-0501">Molybdenum cofactor biosynthesis</keyword>
<keyword id="KW-1185">Reference proteome</keyword>
<keyword id="KW-0808">Transferase</keyword>
<protein>
    <recommendedName>
        <fullName>Molybdopterin molybdenumtransferase</fullName>
        <shortName>MPT Mo-transferase</shortName>
        <ecNumber>2.10.1.1</ecNumber>
    </recommendedName>
</protein>
<gene>
    <name type="primary">moeA</name>
    <name type="ordered locus">slr0900</name>
</gene>